<sequence>MRLHSVLAVATAVGCAVAHDPVVQVPMCPWNAVINFDKTVPDQKPFPQTTIRLCYNSKTLSLKFEAKDEKYFYFDPSQKINDDIWKYEVMEAFISTGHADPSTYLEFEVSPNNVTYQAFVYNPSKNRTDGAPFDHAFISNPIADGITSKTSLAQTQGKWTSNVQIPLALFNVDTPQGSKWRMNFFRTVTSKETYPDQILGAWNSPDKASFHITSFFRKIVFV</sequence>
<name>A3106_ARTBC</name>
<comment type="subcellular location">
    <subcellularLocation>
        <location evidence="3">Secreted</location>
    </subcellularLocation>
</comment>
<proteinExistence type="evidence at protein level"/>
<protein>
    <recommendedName>
        <fullName evidence="4">Extracellular protein ARB_03106</fullName>
    </recommendedName>
</protein>
<reference key="1">
    <citation type="journal article" date="2011" name="Genome Biol.">
        <title>Comparative and functional genomics provide insights into the pathogenicity of dermatophytic fungi.</title>
        <authorList>
            <person name="Burmester A."/>
            <person name="Shelest E."/>
            <person name="Gloeckner G."/>
            <person name="Heddergott C."/>
            <person name="Schindler S."/>
            <person name="Staib P."/>
            <person name="Heidel A."/>
            <person name="Felder M."/>
            <person name="Petzold A."/>
            <person name="Szafranski K."/>
            <person name="Feuermann M."/>
            <person name="Pedruzzi I."/>
            <person name="Priebe S."/>
            <person name="Groth M."/>
            <person name="Winkler R."/>
            <person name="Li W."/>
            <person name="Kniemeyer O."/>
            <person name="Schroeckh V."/>
            <person name="Hertweck C."/>
            <person name="Hube B."/>
            <person name="White T.C."/>
            <person name="Platzer M."/>
            <person name="Guthke R."/>
            <person name="Heitman J."/>
            <person name="Woestemeyer J."/>
            <person name="Zipfel P.F."/>
            <person name="Monod M."/>
            <person name="Brakhage A.A."/>
        </authorList>
    </citation>
    <scope>NUCLEOTIDE SEQUENCE [LARGE SCALE GENOMIC DNA]</scope>
    <source>
        <strain>ATCC MYA-4681 / CBS 112371</strain>
    </source>
</reference>
<reference key="2">
    <citation type="journal article" date="2011" name="Proteomics">
        <title>Identification of novel secreted proteases during extracellular proteolysis by dermatophytes at acidic pH.</title>
        <authorList>
            <person name="Sriranganadane D."/>
            <person name="Waridel P."/>
            <person name="Salamin K."/>
            <person name="Feuermann M."/>
            <person name="Mignon B."/>
            <person name="Staib P."/>
            <person name="Neuhaus J.M."/>
            <person name="Quadroni M."/>
            <person name="Monod M."/>
        </authorList>
    </citation>
    <scope>IDENTIFICATION BY MASS SPECTROMETRY</scope>
    <scope>SUBCELLULAR LOCATION</scope>
</reference>
<organism>
    <name type="scientific">Arthroderma benhamiae (strain ATCC MYA-4681 / CBS 112371)</name>
    <name type="common">Trichophyton mentagrophytes</name>
    <dbReference type="NCBI Taxonomy" id="663331"/>
    <lineage>
        <taxon>Eukaryota</taxon>
        <taxon>Fungi</taxon>
        <taxon>Dikarya</taxon>
        <taxon>Ascomycota</taxon>
        <taxon>Pezizomycotina</taxon>
        <taxon>Eurotiomycetes</taxon>
        <taxon>Eurotiomycetidae</taxon>
        <taxon>Onygenales</taxon>
        <taxon>Arthrodermataceae</taxon>
        <taxon>Trichophyton</taxon>
    </lineage>
</organism>
<gene>
    <name type="ORF">ARB_03106</name>
</gene>
<accession>D4B3R7</accession>
<evidence type="ECO:0000255" key="1"/>
<evidence type="ECO:0000255" key="2">
    <source>
        <dbReference type="PROSITE-ProRule" id="PRU00498"/>
    </source>
</evidence>
<evidence type="ECO:0000269" key="3">
    <source>
    </source>
</evidence>
<evidence type="ECO:0000305" key="4"/>
<feature type="signal peptide" evidence="1">
    <location>
        <begin position="1"/>
        <end position="18"/>
    </location>
</feature>
<feature type="chain" id="PRO_0000434481" description="Extracellular protein ARB_03106" evidence="1">
    <location>
        <begin position="19"/>
        <end position="222"/>
    </location>
</feature>
<feature type="glycosylation site" description="N-linked (GlcNAc...) asparagine" evidence="2">
    <location>
        <position position="113"/>
    </location>
</feature>
<feature type="glycosylation site" description="N-linked (GlcNAc...) asparagine" evidence="2">
    <location>
        <position position="126"/>
    </location>
</feature>
<keyword id="KW-0325">Glycoprotein</keyword>
<keyword id="KW-1185">Reference proteome</keyword>
<keyword id="KW-0964">Secreted</keyword>
<keyword id="KW-0732">Signal</keyword>
<dbReference type="EMBL" id="ABSU01000034">
    <property type="protein sequence ID" value="EFE29765.1"/>
    <property type="molecule type" value="Genomic_DNA"/>
</dbReference>
<dbReference type="RefSeq" id="XP_003010405.1">
    <property type="nucleotide sequence ID" value="XM_003010359.1"/>
</dbReference>
<dbReference type="SMR" id="D4B3R7"/>
<dbReference type="STRING" id="663331.D4B3R7"/>
<dbReference type="GeneID" id="9525757"/>
<dbReference type="KEGG" id="abe:ARB_03106"/>
<dbReference type="eggNOG" id="ENOG502S9Q0">
    <property type="taxonomic scope" value="Eukaryota"/>
</dbReference>
<dbReference type="HOGENOM" id="CLU_083103_0_0_1"/>
<dbReference type="OMA" id="YNPSKNR"/>
<dbReference type="OrthoDB" id="61321at2759"/>
<dbReference type="Proteomes" id="UP000008866">
    <property type="component" value="Unassembled WGS sequence"/>
</dbReference>
<dbReference type="GO" id="GO:0005576">
    <property type="term" value="C:extracellular region"/>
    <property type="evidence" value="ECO:0007669"/>
    <property type="project" value="UniProtKB-SubCell"/>
</dbReference>
<dbReference type="CDD" id="cd09620">
    <property type="entry name" value="CBM9_like_3"/>
    <property type="match status" value="1"/>
</dbReference>
<dbReference type="Gene3D" id="2.60.40.1190">
    <property type="match status" value="1"/>
</dbReference>
<dbReference type="SUPFAM" id="SSF49344">
    <property type="entry name" value="CBD9-like"/>
    <property type="match status" value="1"/>
</dbReference>